<dbReference type="EC" id="2.5.1.18"/>
<dbReference type="GO" id="GO:0005737">
    <property type="term" value="C:cytoplasm"/>
    <property type="evidence" value="ECO:0000303"/>
    <property type="project" value="UniProtKB"/>
</dbReference>
<dbReference type="GO" id="GO:0004364">
    <property type="term" value="F:glutathione transferase activity"/>
    <property type="evidence" value="ECO:0000303"/>
    <property type="project" value="UniProtKB"/>
</dbReference>
<feature type="chain" id="PRO_0000185980" description="Glutathione S-transferase">
    <location>
        <begin position="1"/>
        <end position="15" status="greater than"/>
    </location>
</feature>
<feature type="non-terminal residue" evidence="2">
    <location>
        <position position="15"/>
    </location>
</feature>
<keyword id="KW-0963">Cytoplasm</keyword>
<keyword id="KW-0903">Direct protein sequencing</keyword>
<keyword id="KW-0808">Transferase</keyword>
<organism evidence="3">
    <name type="scientific">Pseudomonas sp. (strain M1)</name>
    <dbReference type="NCBI Taxonomy" id="95619"/>
    <lineage>
        <taxon>Bacteria</taxon>
        <taxon>Pseudomonadati</taxon>
        <taxon>Pseudomonadota</taxon>
        <taxon>Gammaproteobacteria</taxon>
        <taxon>Pseudomonadales</taxon>
        <taxon>Pseudomonadaceae</taxon>
        <taxon>Pseudomonas</taxon>
    </lineage>
</organism>
<protein>
    <recommendedName>
        <fullName>Glutathione S-transferase</fullName>
        <ecNumber>2.5.1.18</ecNumber>
    </recommendedName>
</protein>
<sequence>MLLVIGSKNLSSTNM</sequence>
<comment type="function">
    <text evidence="1">Conjugation of reduced glutathione to a wide number of exogenous and endogenous hydrophobic electrophiles.</text>
</comment>
<comment type="catalytic activity">
    <reaction evidence="1">
        <text>RX + glutathione = an S-substituted glutathione + a halide anion + H(+)</text>
        <dbReference type="Rhea" id="RHEA:16437"/>
        <dbReference type="ChEBI" id="CHEBI:15378"/>
        <dbReference type="ChEBI" id="CHEBI:16042"/>
        <dbReference type="ChEBI" id="CHEBI:17792"/>
        <dbReference type="ChEBI" id="CHEBI:57925"/>
        <dbReference type="ChEBI" id="CHEBI:90779"/>
        <dbReference type="EC" id="2.5.1.18"/>
    </reaction>
</comment>
<comment type="subunit">
    <text evidence="1">Monomer and homodimer.</text>
</comment>
<comment type="subcellular location">
    <subcellularLocation>
        <location evidence="1">Cytoplasm</location>
    </subcellularLocation>
</comment>
<comment type="similarity">
    <text evidence="3">Belongs to the GST superfamily.</text>
</comment>
<evidence type="ECO:0000269" key="1">
    <source>
    </source>
</evidence>
<evidence type="ECO:0000303" key="2">
    <source>
    </source>
</evidence>
<evidence type="ECO:0000305" key="3"/>
<proteinExistence type="evidence at protein level"/>
<accession>P83000</accession>
<name>GSTE2_PSEUO</name>
<reference evidence="3" key="1">
    <citation type="journal article" date="2002" name="Res. Microbiol.">
        <title>Occurrence and properties of glutathione S-transferases in phenol-degrading Pseudomonas strains.</title>
        <authorList>
            <person name="Santos P.M."/>
            <person name="Mignogna G."/>
            <person name="Heipieper H.J."/>
            <person name="Zennaro E."/>
        </authorList>
    </citation>
    <scope>PROTEIN SEQUENCE</scope>
    <scope>FUNCTION</scope>
    <scope>CATALYTIC ACTIVITY</scope>
    <scope>SUBUNIT</scope>
    <scope>SUBCELLULAR LOCATION</scope>
</reference>